<evidence type="ECO:0000255" key="1">
    <source>
        <dbReference type="HAMAP-Rule" id="MF_03109"/>
    </source>
</evidence>
<evidence type="ECO:0000255" key="2">
    <source>
        <dbReference type="PROSITE-ProRule" id="PRU01052"/>
    </source>
</evidence>
<name>SEY1_BABBO</name>
<keyword id="KW-0256">Endoplasmic reticulum</keyword>
<keyword id="KW-0342">GTP-binding</keyword>
<keyword id="KW-0378">Hydrolase</keyword>
<keyword id="KW-0472">Membrane</keyword>
<keyword id="KW-0547">Nucleotide-binding</keyword>
<keyword id="KW-1185">Reference proteome</keyword>
<keyword id="KW-0812">Transmembrane</keyword>
<keyword id="KW-1133">Transmembrane helix</keyword>
<sequence>MTEDVMNDDFDSLVTKPTEFIDYNCDINNGFNDLLKSQKFDKLGFNYNVLSILGCQSSGKSSLLNSVFGLDFDVMNTKLGHSQTTKGLWGALVIPKDTGSGNVTIVIDVEGTDSRERGEGRLTFEHRSALLCLAISDCVVINLWYHSLGNLTGSNYGLLKTVVEANLELAEASENTLASGDYKTVLCFCIRDWFPELAPLETVRQKVVNEYMLGIWNDINKPDKFKNSKLEDIFRFELYGFNHALVHPDEFAKDSSRFRLAWATSISPKSYSRAVPSDGFFYYASNILQTVKDQSHLDIPNQREMLANFRCQEIKGGVLDEMVPSISSMLTDAQSGVMDDFQHRAVELVDVAVGKYLELASRYDKTTSNKIGNELVISVFSKLQPVFDAIISHHCSDLAVRATVRLNEKFAISGKERSPMVGGQKAADVWPKFNMLTDEIKAELYNSLNSHILSCAINYSHESGIQAQSDFDTSAAVDMFNVTFKNEVESVRARHIRALLGQITDLVDSGFKVIGEALLERNVTSDKYWGDVNDLIDRAYSTCLDTMGPCYTGLVPSVQPNEFEYLAFMILLQATKCNLERTESRITDIILERFEQFFQYQEFNGETVPRDWGSYTEEELKQTYTQCKKEALNIVAVLRDCSPPTLEVPAFEVSSLKPNHVLYQELSAGVDSLRATTTSLSDEVLVDTVKACRKRFQEFFRTAQQIQSSSKNGISWKNIPPPFWILLLLCSWNELCSVLRIVFKVQVLIPLIILGFIVVQYFSHLVFGTSADAVFRPFKRQARELAMVGTKWIFKVATSTAAAAVNAGAKTTFLSDDDNDSGKKAEEN</sequence>
<gene>
    <name type="ORF">BBOV_II001090</name>
</gene>
<dbReference type="EC" id="3.6.5.-" evidence="1"/>
<dbReference type="EMBL" id="AAXT02000003">
    <property type="protein sequence ID" value="EDO06068.1"/>
    <property type="molecule type" value="Genomic_DNA"/>
</dbReference>
<dbReference type="RefSeq" id="XP_001609636.1">
    <property type="nucleotide sequence ID" value="XM_001609586.1"/>
</dbReference>
<dbReference type="SMR" id="A7AT07"/>
<dbReference type="FunCoup" id="A7AT07">
    <property type="interactions" value="4"/>
</dbReference>
<dbReference type="STRING" id="5865.A7AT07"/>
<dbReference type="EnsemblProtists" id="EDO06068">
    <property type="protein sequence ID" value="EDO06068"/>
    <property type="gene ID" value="BBOV_II001090"/>
</dbReference>
<dbReference type="GeneID" id="5477861"/>
<dbReference type="KEGG" id="bbo:BBOV_II001090"/>
<dbReference type="VEuPathDB" id="PiroplasmaDB:BBOV_II001090"/>
<dbReference type="eggNOG" id="KOG2203">
    <property type="taxonomic scope" value="Eukaryota"/>
</dbReference>
<dbReference type="InParanoid" id="A7AT07"/>
<dbReference type="OMA" id="PIIKMTE"/>
<dbReference type="Proteomes" id="UP000002173">
    <property type="component" value="Unassembled WGS sequence"/>
</dbReference>
<dbReference type="GO" id="GO:0005789">
    <property type="term" value="C:endoplasmic reticulum membrane"/>
    <property type="evidence" value="ECO:0007669"/>
    <property type="project" value="UniProtKB-SubCell"/>
</dbReference>
<dbReference type="GO" id="GO:0005525">
    <property type="term" value="F:GTP binding"/>
    <property type="evidence" value="ECO:0007669"/>
    <property type="project" value="UniProtKB-UniRule"/>
</dbReference>
<dbReference type="GO" id="GO:0003924">
    <property type="term" value="F:GTPase activity"/>
    <property type="evidence" value="ECO:0007669"/>
    <property type="project" value="UniProtKB-UniRule"/>
</dbReference>
<dbReference type="GO" id="GO:0016320">
    <property type="term" value="P:endoplasmic reticulum membrane fusion"/>
    <property type="evidence" value="ECO:0007669"/>
    <property type="project" value="TreeGrafter"/>
</dbReference>
<dbReference type="CDD" id="cd01851">
    <property type="entry name" value="GBP"/>
    <property type="match status" value="1"/>
</dbReference>
<dbReference type="Gene3D" id="3.40.50.300">
    <property type="entry name" value="P-loop containing nucleotide triphosphate hydrolases"/>
    <property type="match status" value="1"/>
</dbReference>
<dbReference type="HAMAP" id="MF_03109">
    <property type="entry name" value="Sey1"/>
    <property type="match status" value="1"/>
</dbReference>
<dbReference type="InterPro" id="IPR030386">
    <property type="entry name" value="G_GB1_RHD3_dom"/>
</dbReference>
<dbReference type="InterPro" id="IPR027417">
    <property type="entry name" value="P-loop_NTPase"/>
</dbReference>
<dbReference type="InterPro" id="IPR008803">
    <property type="entry name" value="RHD3/Sey1"/>
</dbReference>
<dbReference type="InterPro" id="IPR046758">
    <property type="entry name" value="Sey1/RHD3-like_3HB"/>
</dbReference>
<dbReference type="PANTHER" id="PTHR45923">
    <property type="entry name" value="PROTEIN SEY1"/>
    <property type="match status" value="1"/>
</dbReference>
<dbReference type="PANTHER" id="PTHR45923:SF2">
    <property type="entry name" value="PROTEIN SEY1"/>
    <property type="match status" value="1"/>
</dbReference>
<dbReference type="Pfam" id="PF05879">
    <property type="entry name" value="RHD3_GTPase"/>
    <property type="match status" value="1"/>
</dbReference>
<dbReference type="Pfam" id="PF20428">
    <property type="entry name" value="Sey1_3HB"/>
    <property type="match status" value="1"/>
</dbReference>
<dbReference type="SUPFAM" id="SSF52540">
    <property type="entry name" value="P-loop containing nucleoside triphosphate hydrolases"/>
    <property type="match status" value="1"/>
</dbReference>
<dbReference type="PROSITE" id="PS51715">
    <property type="entry name" value="G_GB1_RHD3"/>
    <property type="match status" value="1"/>
</dbReference>
<proteinExistence type="inferred from homology"/>
<comment type="function">
    <text evidence="1">Probable GTP-binding protein that may be involved in cell development.</text>
</comment>
<comment type="subcellular location">
    <subcellularLocation>
        <location evidence="1">Endoplasmic reticulum membrane</location>
        <topology evidence="1">Multi-pass membrane protein</topology>
    </subcellularLocation>
</comment>
<comment type="similarity">
    <text evidence="2">Belongs to the TRAFAC class dynamin-like GTPase superfamily. GB1/RHD3 GTPase family. RHD3 subfamily.</text>
</comment>
<feature type="chain" id="PRO_0000384941" description="Protein SEY1 homolog">
    <location>
        <begin position="1"/>
        <end position="828"/>
    </location>
</feature>
<feature type="topological domain" description="Cytoplasmic" evidence="1">
    <location>
        <begin position="1"/>
        <end position="718"/>
    </location>
</feature>
<feature type="transmembrane region" description="Helical" evidence="1">
    <location>
        <begin position="719"/>
        <end position="739"/>
    </location>
</feature>
<feature type="topological domain" description="Lumenal" evidence="1">
    <location>
        <begin position="740"/>
        <end position="742"/>
    </location>
</feature>
<feature type="transmembrane region" description="Helical" evidence="1">
    <location>
        <begin position="743"/>
        <end position="763"/>
    </location>
</feature>
<feature type="topological domain" description="Cytoplasmic" evidence="1">
    <location>
        <begin position="764"/>
        <end position="828"/>
    </location>
</feature>
<feature type="domain" description="GB1/RHD3-type G" evidence="2">
    <location>
        <begin position="44"/>
        <end position="284"/>
    </location>
</feature>
<feature type="binding site" evidence="1">
    <location>
        <begin position="54"/>
        <end position="61"/>
    </location>
    <ligand>
        <name>GTP</name>
        <dbReference type="ChEBI" id="CHEBI:37565"/>
    </ligand>
</feature>
<reference key="1">
    <citation type="journal article" date="2007" name="PLoS Pathog.">
        <title>Genome sequence of Babesia bovis and comparative analysis of apicomplexan hemoprotozoa.</title>
        <authorList>
            <person name="Brayton K.A."/>
            <person name="Lau A.O.T."/>
            <person name="Herndon D.R."/>
            <person name="Hannick L."/>
            <person name="Kappmeyer L.S."/>
            <person name="Berens S.J."/>
            <person name="Bidwell S.L."/>
            <person name="Brown W.C."/>
            <person name="Crabtree J."/>
            <person name="Fadrosh D."/>
            <person name="Feldblum T."/>
            <person name="Forberger H.A."/>
            <person name="Haas B.J."/>
            <person name="Howell J.M."/>
            <person name="Khouri H."/>
            <person name="Koo H."/>
            <person name="Mann D.J."/>
            <person name="Norimine J."/>
            <person name="Paulsen I.T."/>
            <person name="Radune D."/>
            <person name="Ren Q."/>
            <person name="Smith R.K. Jr."/>
            <person name="Suarez C.E."/>
            <person name="White O."/>
            <person name="Wortman J.R."/>
            <person name="Knowles D.P. Jr."/>
            <person name="McElwain T.F."/>
            <person name="Nene V.M."/>
        </authorList>
    </citation>
    <scope>NUCLEOTIDE SEQUENCE [LARGE SCALE GENOMIC DNA]</scope>
    <source>
        <strain>T2Bo</strain>
    </source>
</reference>
<accession>A7AT07</accession>
<protein>
    <recommendedName>
        <fullName evidence="1">Protein SEY1 homolog</fullName>
        <ecNumber evidence="1">3.6.5.-</ecNumber>
    </recommendedName>
</protein>
<organism>
    <name type="scientific">Babesia bovis</name>
    <dbReference type="NCBI Taxonomy" id="5865"/>
    <lineage>
        <taxon>Eukaryota</taxon>
        <taxon>Sar</taxon>
        <taxon>Alveolata</taxon>
        <taxon>Apicomplexa</taxon>
        <taxon>Aconoidasida</taxon>
        <taxon>Piroplasmida</taxon>
        <taxon>Babesiidae</taxon>
        <taxon>Babesia</taxon>
    </lineage>
</organism>